<organism>
    <name type="scientific">Saccharomyces cerevisiae (strain ATCC 204508 / S288c)</name>
    <name type="common">Baker's yeast</name>
    <dbReference type="NCBI Taxonomy" id="559292"/>
    <lineage>
        <taxon>Eukaryota</taxon>
        <taxon>Fungi</taxon>
        <taxon>Dikarya</taxon>
        <taxon>Ascomycota</taxon>
        <taxon>Saccharomycotina</taxon>
        <taxon>Saccharomycetes</taxon>
        <taxon>Saccharomycetales</taxon>
        <taxon>Saccharomycetaceae</taxon>
        <taxon>Saccharomyces</taxon>
    </lineage>
</organism>
<name>PBP4_YEAST</name>
<sequence>MTTTSTTSVDGRTSSTLKATLSASGPNSNGPTPAVLPQKPKLTGWAQAAAKALPRQQQQQQQARKDDSVAVQPANTKTKTIASTAPPANIKGSSTANGSSTNKKFKRANKQPYNREEVRSYMHKLFQSYTAGEKSHSMKTYKQVLSETASGRVSTATDWGTVSSSKNKNKKYGCLSDIAKVLRNQ</sequence>
<gene>
    <name type="primary">PBP4</name>
    <name type="ordered locus">YDL053C</name>
    <name type="ORF">D2574</name>
</gene>
<protein>
    <recommendedName>
        <fullName>Protein PBP4</fullName>
    </recommendedName>
    <alternativeName>
        <fullName>PBP1-binding protein 4</fullName>
    </alternativeName>
</protein>
<proteinExistence type="evidence at protein level"/>
<feature type="chain" id="PRO_0000262746" description="Protein PBP4">
    <location>
        <begin position="1"/>
        <end position="185"/>
    </location>
</feature>
<feature type="region of interest" description="Disordered" evidence="1">
    <location>
        <begin position="1"/>
        <end position="116"/>
    </location>
</feature>
<feature type="region of interest" description="Disordered" evidence="1">
    <location>
        <begin position="147"/>
        <end position="168"/>
    </location>
</feature>
<feature type="compositionally biased region" description="Low complexity" evidence="1">
    <location>
        <begin position="1"/>
        <end position="24"/>
    </location>
</feature>
<feature type="compositionally biased region" description="Low complexity" evidence="1">
    <location>
        <begin position="46"/>
        <end position="62"/>
    </location>
</feature>
<feature type="compositionally biased region" description="Polar residues" evidence="1">
    <location>
        <begin position="73"/>
        <end position="83"/>
    </location>
</feature>
<feature type="compositionally biased region" description="Polar residues" evidence="1">
    <location>
        <begin position="91"/>
        <end position="102"/>
    </location>
</feature>
<feature type="compositionally biased region" description="Polar residues" evidence="1">
    <location>
        <begin position="147"/>
        <end position="166"/>
    </location>
</feature>
<reference key="1">
    <citation type="journal article" date="1997" name="Nature">
        <title>The nucleotide sequence of Saccharomyces cerevisiae chromosome IV.</title>
        <authorList>
            <person name="Jacq C."/>
            <person name="Alt-Moerbe J."/>
            <person name="Andre B."/>
            <person name="Arnold W."/>
            <person name="Bahr A."/>
            <person name="Ballesta J.P.G."/>
            <person name="Bargues M."/>
            <person name="Baron L."/>
            <person name="Becker A."/>
            <person name="Biteau N."/>
            <person name="Bloecker H."/>
            <person name="Blugeon C."/>
            <person name="Boskovic J."/>
            <person name="Brandt P."/>
            <person name="Brueckner M."/>
            <person name="Buitrago M.J."/>
            <person name="Coster F."/>
            <person name="Delaveau T."/>
            <person name="del Rey F."/>
            <person name="Dujon B."/>
            <person name="Eide L.G."/>
            <person name="Garcia-Cantalejo J.M."/>
            <person name="Goffeau A."/>
            <person name="Gomez-Peris A."/>
            <person name="Granotier C."/>
            <person name="Hanemann V."/>
            <person name="Hankeln T."/>
            <person name="Hoheisel J.D."/>
            <person name="Jaeger W."/>
            <person name="Jimenez A."/>
            <person name="Jonniaux J.-L."/>
            <person name="Kraemer C."/>
            <person name="Kuester H."/>
            <person name="Laamanen P."/>
            <person name="Legros Y."/>
            <person name="Louis E.J."/>
            <person name="Moeller-Rieker S."/>
            <person name="Monnet A."/>
            <person name="Moro M."/>
            <person name="Mueller-Auer S."/>
            <person name="Nussbaumer B."/>
            <person name="Paricio N."/>
            <person name="Paulin L."/>
            <person name="Perea J."/>
            <person name="Perez-Alonso M."/>
            <person name="Perez-Ortin J.E."/>
            <person name="Pohl T.M."/>
            <person name="Prydz H."/>
            <person name="Purnelle B."/>
            <person name="Rasmussen S.W."/>
            <person name="Remacha M.A."/>
            <person name="Revuelta J.L."/>
            <person name="Rieger M."/>
            <person name="Salom D."/>
            <person name="Saluz H.P."/>
            <person name="Saiz J.E."/>
            <person name="Saren A.-M."/>
            <person name="Schaefer M."/>
            <person name="Scharfe M."/>
            <person name="Schmidt E.R."/>
            <person name="Schneider C."/>
            <person name="Scholler P."/>
            <person name="Schwarz S."/>
            <person name="Soler-Mira A."/>
            <person name="Urrestarazu L.A."/>
            <person name="Verhasselt P."/>
            <person name="Vissers S."/>
            <person name="Voet M."/>
            <person name="Volckaert G."/>
            <person name="Wagner G."/>
            <person name="Wambutt R."/>
            <person name="Wedler E."/>
            <person name="Wedler H."/>
            <person name="Woelfl S."/>
            <person name="Harris D.E."/>
            <person name="Bowman S."/>
            <person name="Brown D."/>
            <person name="Churcher C.M."/>
            <person name="Connor R."/>
            <person name="Dedman K."/>
            <person name="Gentles S."/>
            <person name="Hamlin N."/>
            <person name="Hunt S."/>
            <person name="Jones L."/>
            <person name="McDonald S."/>
            <person name="Murphy L.D."/>
            <person name="Niblett D."/>
            <person name="Odell C."/>
            <person name="Oliver K."/>
            <person name="Rajandream M.A."/>
            <person name="Richards C."/>
            <person name="Shore L."/>
            <person name="Walsh S.V."/>
            <person name="Barrell B.G."/>
            <person name="Dietrich F.S."/>
            <person name="Mulligan J.T."/>
            <person name="Allen E."/>
            <person name="Araujo R."/>
            <person name="Aviles E."/>
            <person name="Berno A."/>
            <person name="Carpenter J."/>
            <person name="Chen E."/>
            <person name="Cherry J.M."/>
            <person name="Chung E."/>
            <person name="Duncan M."/>
            <person name="Hunicke-Smith S."/>
            <person name="Hyman R.W."/>
            <person name="Komp C."/>
            <person name="Lashkari D."/>
            <person name="Lew H."/>
            <person name="Lin D."/>
            <person name="Mosedale D."/>
            <person name="Nakahara K."/>
            <person name="Namath A."/>
            <person name="Oefner P."/>
            <person name="Oh C."/>
            <person name="Petel F.X."/>
            <person name="Roberts D."/>
            <person name="Schramm S."/>
            <person name="Schroeder M."/>
            <person name="Shogren T."/>
            <person name="Shroff N."/>
            <person name="Winant A."/>
            <person name="Yelton M.A."/>
            <person name="Botstein D."/>
            <person name="Davis R.W."/>
            <person name="Johnston M."/>
            <person name="Andrews S."/>
            <person name="Brinkman R."/>
            <person name="Cooper J."/>
            <person name="Ding H."/>
            <person name="Du Z."/>
            <person name="Favello A."/>
            <person name="Fulton L."/>
            <person name="Gattung S."/>
            <person name="Greco T."/>
            <person name="Hallsworth K."/>
            <person name="Hawkins J."/>
            <person name="Hillier L.W."/>
            <person name="Jier M."/>
            <person name="Johnson D."/>
            <person name="Johnston L."/>
            <person name="Kirsten J."/>
            <person name="Kucaba T."/>
            <person name="Langston Y."/>
            <person name="Latreille P."/>
            <person name="Le T."/>
            <person name="Mardis E."/>
            <person name="Menezes S."/>
            <person name="Miller N."/>
            <person name="Nhan M."/>
            <person name="Pauley A."/>
            <person name="Peluso D."/>
            <person name="Rifkin L."/>
            <person name="Riles L."/>
            <person name="Taich A."/>
            <person name="Trevaskis E."/>
            <person name="Vignati D."/>
            <person name="Wilcox L."/>
            <person name="Wohldman P."/>
            <person name="Vaudin M."/>
            <person name="Wilson R."/>
            <person name="Waterston R."/>
            <person name="Albermann K."/>
            <person name="Hani J."/>
            <person name="Heumann K."/>
            <person name="Kleine K."/>
            <person name="Mewes H.-W."/>
            <person name="Zollner A."/>
            <person name="Zaccaria P."/>
        </authorList>
    </citation>
    <scope>NUCLEOTIDE SEQUENCE [LARGE SCALE GENOMIC DNA]</scope>
    <source>
        <strain>ATCC 204508 / S288c</strain>
    </source>
</reference>
<reference key="2">
    <citation type="journal article" date="2014" name="G3 (Bethesda)">
        <title>The reference genome sequence of Saccharomyces cerevisiae: Then and now.</title>
        <authorList>
            <person name="Engel S.R."/>
            <person name="Dietrich F.S."/>
            <person name="Fisk D.G."/>
            <person name="Binkley G."/>
            <person name="Balakrishnan R."/>
            <person name="Costanzo M.C."/>
            <person name="Dwight S.S."/>
            <person name="Hitz B.C."/>
            <person name="Karra K."/>
            <person name="Nash R.S."/>
            <person name="Weng S."/>
            <person name="Wong E.D."/>
            <person name="Lloyd P."/>
            <person name="Skrzypek M.S."/>
            <person name="Miyasato S.R."/>
            <person name="Simison M."/>
            <person name="Cherry J.M."/>
        </authorList>
    </citation>
    <scope>GENOME REANNOTATION</scope>
    <source>
        <strain>ATCC 204508 / S288c</strain>
    </source>
</reference>
<reference key="3">
    <citation type="journal article" date="2003" name="Nature">
        <title>Global analysis of protein localization in budding yeast.</title>
        <authorList>
            <person name="Huh W.-K."/>
            <person name="Falvo J.V."/>
            <person name="Gerke L.C."/>
            <person name="Carroll A.S."/>
            <person name="Howson R.W."/>
            <person name="Weissman J.S."/>
            <person name="O'Shea E.K."/>
        </authorList>
    </citation>
    <scope>SUBCELLULAR LOCATION [LARGE SCALE ANALYSIS]</scope>
</reference>
<reference key="4">
    <citation type="journal article" date="2003" name="Nature">
        <title>Global analysis of protein expression in yeast.</title>
        <authorList>
            <person name="Ghaemmaghami S."/>
            <person name="Huh W.-K."/>
            <person name="Bower K."/>
            <person name="Howson R.W."/>
            <person name="Belle A."/>
            <person name="Dephoure N."/>
            <person name="O'Shea E.K."/>
            <person name="Weissman J.S."/>
        </authorList>
    </citation>
    <scope>LEVEL OF PROTEIN EXPRESSION [LARGE SCALE ANALYSIS]</scope>
</reference>
<reference key="5">
    <citation type="journal article" date="2004" name="Mol. Cell. Biol.">
        <title>Identification of factors regulating poly(A) tail synthesis and maturation.</title>
        <authorList>
            <person name="Mangus D.A."/>
            <person name="Smith M.M."/>
            <person name="McSweeney J.M."/>
            <person name="Jacobson A."/>
        </authorList>
    </citation>
    <scope>INTERACTION WITH PBP1</scope>
</reference>
<reference key="6">
    <citation type="journal article" date="2006" name="Genes Dev.">
        <title>Systematic identification and functional screens of uncharacterized proteins associated with eukaryotic ribosomal complexes.</title>
        <authorList>
            <person name="Fleischer T.C."/>
            <person name="Weaver C.M."/>
            <person name="McAfee K.J."/>
            <person name="Jennings J.L."/>
            <person name="Link A.J."/>
        </authorList>
    </citation>
    <scope>INTERACTION WITH LSM12 AND PBP1</scope>
    <scope>IDENTIFICATION BY MASS SPECTROMETRY</scope>
</reference>
<reference key="7">
    <citation type="journal article" date="2009" name="Science">
        <title>Global analysis of Cdk1 substrate phosphorylation sites provides insights into evolution.</title>
        <authorList>
            <person name="Holt L.J."/>
            <person name="Tuch B.B."/>
            <person name="Villen J."/>
            <person name="Johnson A.D."/>
            <person name="Gygi S.P."/>
            <person name="Morgan D.O."/>
        </authorList>
    </citation>
    <scope>IDENTIFICATION BY MASS SPECTROMETRY [LARGE SCALE ANALYSIS]</scope>
</reference>
<reference key="8">
    <citation type="journal article" date="2010" name="Mol. Cell">
        <title>Initiation of the TORC1-regulated G0 program requires Igo1/2, which license specific mRNAs to evade degradation via the 5'-3' mRNA decay pathway.</title>
        <authorList>
            <person name="Talarek N."/>
            <person name="Cameroni E."/>
            <person name="Jaquenoud M."/>
            <person name="Luo X."/>
            <person name="Bontron S."/>
            <person name="Lippman S."/>
            <person name="Devgan G."/>
            <person name="Snyder M."/>
            <person name="Broach J.R."/>
            <person name="De Virgilio C."/>
        </authorList>
    </citation>
    <scope>INTERACTION WITH IGO1</scope>
</reference>
<reference key="9">
    <citation type="journal article" date="2012" name="Proc. Natl. Acad. Sci. U.S.A.">
        <title>N-terminal acetylome analyses and functional insights of the N-terminal acetyltransferase NatB.</title>
        <authorList>
            <person name="Van Damme P."/>
            <person name="Lasa M."/>
            <person name="Polevoda B."/>
            <person name="Gazquez C."/>
            <person name="Elosegui-Artola A."/>
            <person name="Kim D.S."/>
            <person name="De Juan-Pardo E."/>
            <person name="Demeyer K."/>
            <person name="Hole K."/>
            <person name="Larrea E."/>
            <person name="Timmerman E."/>
            <person name="Prieto J."/>
            <person name="Arnesen T."/>
            <person name="Sherman F."/>
            <person name="Gevaert K."/>
            <person name="Aldabe R."/>
        </authorList>
    </citation>
    <scope>IDENTIFICATION BY MASS SPECTROMETRY [LARGE SCALE ANALYSIS]</scope>
</reference>
<accession>Q07362</accession>
<accession>D6VRU3</accession>
<evidence type="ECO:0000256" key="1">
    <source>
        <dbReference type="SAM" id="MobiDB-lite"/>
    </source>
</evidence>
<evidence type="ECO:0000269" key="2">
    <source>
    </source>
</evidence>
<evidence type="ECO:0000269" key="3">
    <source>
    </source>
</evidence>
<evidence type="ECO:0000269" key="4">
    <source>
    </source>
</evidence>
<evidence type="ECO:0000269" key="5">
    <source>
    </source>
</evidence>
<evidence type="ECO:0000269" key="6">
    <source>
    </source>
</evidence>
<dbReference type="EMBL" id="Z74101">
    <property type="protein sequence ID" value="CAA98615.1"/>
    <property type="molecule type" value="Genomic_DNA"/>
</dbReference>
<dbReference type="EMBL" id="BK006938">
    <property type="protein sequence ID" value="DAA11803.1"/>
    <property type="molecule type" value="Genomic_DNA"/>
</dbReference>
<dbReference type="PIR" id="S67588">
    <property type="entry name" value="S67588"/>
</dbReference>
<dbReference type="RefSeq" id="NP_010230.1">
    <property type="nucleotide sequence ID" value="NM_001180112.1"/>
</dbReference>
<dbReference type="SMR" id="Q07362"/>
<dbReference type="BioGRID" id="32006">
    <property type="interactions" value="180"/>
</dbReference>
<dbReference type="DIP" id="DIP-5229N"/>
<dbReference type="FunCoup" id="Q07362">
    <property type="interactions" value="137"/>
</dbReference>
<dbReference type="IntAct" id="Q07362">
    <property type="interactions" value="32"/>
</dbReference>
<dbReference type="MINT" id="Q07362"/>
<dbReference type="STRING" id="4932.YDL053C"/>
<dbReference type="GlyGen" id="Q07362">
    <property type="glycosylation" value="1 site"/>
</dbReference>
<dbReference type="iPTMnet" id="Q07362"/>
<dbReference type="PaxDb" id="4932-YDL053C"/>
<dbReference type="PeptideAtlas" id="Q07362"/>
<dbReference type="EnsemblFungi" id="YDL053C_mRNA">
    <property type="protein sequence ID" value="YDL053C"/>
    <property type="gene ID" value="YDL053C"/>
</dbReference>
<dbReference type="GeneID" id="851507"/>
<dbReference type="KEGG" id="sce:YDL053C"/>
<dbReference type="AGR" id="SGD:S000002211"/>
<dbReference type="SGD" id="S000002211">
    <property type="gene designation" value="PBP4"/>
</dbReference>
<dbReference type="VEuPathDB" id="FungiDB:YDL053C"/>
<dbReference type="eggNOG" id="ENOG502S9P5">
    <property type="taxonomic scope" value="Eukaryota"/>
</dbReference>
<dbReference type="HOGENOM" id="CLU_125609_0_0_1"/>
<dbReference type="InParanoid" id="Q07362"/>
<dbReference type="OMA" id="KWKSKRY"/>
<dbReference type="OrthoDB" id="4036571at2759"/>
<dbReference type="BioCyc" id="YEAST:G3O-29470-MONOMER"/>
<dbReference type="BioGRID-ORCS" id="851507">
    <property type="hits" value="0 hits in 10 CRISPR screens"/>
</dbReference>
<dbReference type="CD-CODE" id="E03F929F">
    <property type="entry name" value="Stress granule"/>
</dbReference>
<dbReference type="PRO" id="PR:Q07362"/>
<dbReference type="Proteomes" id="UP000002311">
    <property type="component" value="Chromosome IV"/>
</dbReference>
<dbReference type="RNAct" id="Q07362">
    <property type="molecule type" value="protein"/>
</dbReference>
<dbReference type="GO" id="GO:0005737">
    <property type="term" value="C:cytoplasm"/>
    <property type="evidence" value="ECO:0007005"/>
    <property type="project" value="SGD"/>
</dbReference>
<dbReference type="GO" id="GO:0010494">
    <property type="term" value="C:cytoplasmic stress granule"/>
    <property type="evidence" value="ECO:0000314"/>
    <property type="project" value="SGD"/>
</dbReference>
<dbReference type="GO" id="GO:0005634">
    <property type="term" value="C:nucleus"/>
    <property type="evidence" value="ECO:0007005"/>
    <property type="project" value="SGD"/>
</dbReference>
<dbReference type="GO" id="GO:0005777">
    <property type="term" value="C:peroxisome"/>
    <property type="evidence" value="ECO:0000314"/>
    <property type="project" value="SGD"/>
</dbReference>
<keyword id="KW-0963">Cytoplasm</keyword>
<keyword id="KW-0539">Nucleus</keyword>
<keyword id="KW-1185">Reference proteome</keyword>
<comment type="subunit">
    <text evidence="4 5 6">Interacts with IGO1, LSM12 and PBP1.</text>
</comment>
<comment type="subcellular location">
    <subcellularLocation>
        <location evidence="2">Cytoplasm</location>
    </subcellularLocation>
    <subcellularLocation>
        <location evidence="2">Nucleus</location>
    </subcellularLocation>
</comment>
<comment type="miscellaneous">
    <text evidence="3">Present with 1560 molecules/cell in log phase SD medium.</text>
</comment>